<proteinExistence type="inferred from homology"/>
<name>YNGD_CLOPF</name>
<organism>
    <name type="scientific">Clostridium perfringens</name>
    <dbReference type="NCBI Taxonomy" id="1502"/>
    <lineage>
        <taxon>Bacteria</taxon>
        <taxon>Bacillati</taxon>
        <taxon>Bacillota</taxon>
        <taxon>Clostridia</taxon>
        <taxon>Eubacteriales</taxon>
        <taxon>Clostridiaceae</taxon>
        <taxon>Clostridium</taxon>
    </lineage>
</organism>
<reference key="1">
    <citation type="journal article" date="1994" name="Mol. Gen. Genet.">
        <title>Molecular genetic analysis of the nagH gene encoding a hyaluronidase of Clostridium perfringens.</title>
        <authorList>
            <person name="Canard B."/>
            <person name="Garnier T."/>
            <person name="Saint-Joanis B."/>
            <person name="Cole S.T."/>
        </authorList>
    </citation>
    <scope>NUCLEOTIDE SEQUENCE [GENOMIC DNA]</scope>
    <source>
        <strain>CPN50</strain>
    </source>
</reference>
<evidence type="ECO:0000255" key="1"/>
<evidence type="ECO:0000305" key="2"/>
<sequence length="132" mass="14894">MENIINYIKWGIVSLGTLFTWIFGAWDIPLITLLVFIFLDYLTGVIKGCKSKELCSNIGLRGITKKGLILVVLLVAVMLDRLLDNGTWMFRTLIAYFYIMNEGISILENCAALGVPIPEKLKQALKQLNNKK</sequence>
<dbReference type="EMBL" id="M81878">
    <property type="protein sequence ID" value="AAA23260.1"/>
    <property type="molecule type" value="Genomic_DNA"/>
</dbReference>
<dbReference type="PIR" id="S43905">
    <property type="entry name" value="S43905"/>
</dbReference>
<dbReference type="RefSeq" id="WP_011590165.1">
    <property type="nucleotide sequence ID" value="NZ_WNWD01000065.1"/>
</dbReference>
<dbReference type="SMR" id="P26835"/>
<dbReference type="GeneID" id="93003283"/>
<dbReference type="PATRIC" id="fig|1502.176.peg.427"/>
<dbReference type="GO" id="GO:0005886">
    <property type="term" value="C:plasma membrane"/>
    <property type="evidence" value="ECO:0007669"/>
    <property type="project" value="UniProtKB-SubCell"/>
</dbReference>
<dbReference type="InterPro" id="IPR006480">
    <property type="entry name" value="Phage_holin_4_1"/>
</dbReference>
<dbReference type="NCBIfam" id="TIGR01593">
    <property type="entry name" value="holin_tox_secr"/>
    <property type="match status" value="1"/>
</dbReference>
<dbReference type="Pfam" id="PF05105">
    <property type="entry name" value="Phage_holin_4_1"/>
    <property type="match status" value="1"/>
</dbReference>
<protein>
    <recommendedName>
        <fullName>Uncharacterized 14.9 kDa protein in nagH 3'region</fullName>
    </recommendedName>
    <alternativeName>
        <fullName>ORFD</fullName>
    </alternativeName>
</protein>
<keyword id="KW-1003">Cell membrane</keyword>
<keyword id="KW-0472">Membrane</keyword>
<keyword id="KW-0812">Transmembrane</keyword>
<keyword id="KW-1133">Transmembrane helix</keyword>
<accession>P26835</accession>
<feature type="chain" id="PRO_0000172864" description="Uncharacterized 14.9 kDa protein in nagH 3'region">
    <location>
        <begin position="1"/>
        <end position="132"/>
    </location>
</feature>
<feature type="transmembrane region" description="Helical" evidence="1">
    <location>
        <begin position="19"/>
        <end position="39"/>
    </location>
</feature>
<feature type="transmembrane region" description="Helical" evidence="1">
    <location>
        <begin position="58"/>
        <end position="78"/>
    </location>
</feature>
<feature type="transmembrane region" description="Helical" evidence="1">
    <location>
        <begin position="93"/>
        <end position="113"/>
    </location>
</feature>
<comment type="subcellular location">
    <subcellularLocation>
        <location evidence="2">Cell membrane</location>
        <topology evidence="2">Multi-pass membrane protein</topology>
    </subcellularLocation>
</comment>
<comment type="similarity">
    <text evidence="2">Belongs to the bacteriophage holin family. Cp-1 holin subfamily.</text>
</comment>